<reference key="1">
    <citation type="submission" date="2007-10" db="EMBL/GenBank/DDBJ databases">
        <title>Complete sequence of Salinispora arenicola CNS-205.</title>
        <authorList>
            <consortium name="US DOE Joint Genome Institute"/>
            <person name="Copeland A."/>
            <person name="Lucas S."/>
            <person name="Lapidus A."/>
            <person name="Barry K."/>
            <person name="Glavina del Rio T."/>
            <person name="Dalin E."/>
            <person name="Tice H."/>
            <person name="Pitluck S."/>
            <person name="Foster B."/>
            <person name="Schmutz J."/>
            <person name="Larimer F."/>
            <person name="Land M."/>
            <person name="Hauser L."/>
            <person name="Kyrpides N."/>
            <person name="Ivanova N."/>
            <person name="Jensen P.R."/>
            <person name="Moore B.S."/>
            <person name="Penn K."/>
            <person name="Jenkins C."/>
            <person name="Udwary D."/>
            <person name="Xiang L."/>
            <person name="Gontang E."/>
            <person name="Richardson P."/>
        </authorList>
    </citation>
    <scope>NUCLEOTIDE SEQUENCE [LARGE SCALE GENOMIC DNA]</scope>
    <source>
        <strain>CNS-205</strain>
    </source>
</reference>
<evidence type="ECO:0000255" key="1">
    <source>
        <dbReference type="HAMAP-Rule" id="MF_00049"/>
    </source>
</evidence>
<name>SYL_SALAI</name>
<organism>
    <name type="scientific">Salinispora arenicola (strain CNS-205)</name>
    <dbReference type="NCBI Taxonomy" id="391037"/>
    <lineage>
        <taxon>Bacteria</taxon>
        <taxon>Bacillati</taxon>
        <taxon>Actinomycetota</taxon>
        <taxon>Actinomycetes</taxon>
        <taxon>Micromonosporales</taxon>
        <taxon>Micromonosporaceae</taxon>
        <taxon>Salinispora</taxon>
    </lineage>
</organism>
<proteinExistence type="inferred from homology"/>
<sequence length="952" mass="106026">MTEAAASDIPPFRYTAALADEIERRWQDIWEREGTFHAPNPTGPLADPEHPRAGAEKLYVLDMFPYPSGAGLHVGHPLGYIGTDCFARYQRMAGRNVLHAMGFDAFGLPAEQYAVQTGTHPRTTTEANIARYKAQLRRLGLAHDERRSVATIDADFYRWTQWVFLQIYNAWYDREAKRARPIAELIAEFSGGVRRTPDGRPWRELTDVERRSVVDEYRLAYVSQAPVNWCPGLGTVLANEEVTADGRSERGNFPVFKRNLKQWMMRITAYGDRLLDDLDKLDWPEPIKLMQRNWIGRSIGAHIEFPTSAGDSSAVGEPRINVFTTRPDTIFGATYLVLAPEHALVDDLVPTAWPSGTRDAWTGGQASPRAAVAGYRKVAAAKTDMERQAETKEKTGVFIGAYATNPVTGAQIPIFIADYVLAGYGTGAIMAVPGQDERDWAFAEVFDLPIVRTVRPAEGFDGKAYTGEGPAINSAAPERGLNLDGLGVAEAKARTTAWLEASGHGSGAVTYRLRDWLFSRQRYWGEPFPIVYDETGAAIALPEDMLPVELPEVDDFSPRTFDPADAGSNPETPLSRRRDWVEVELDLGDGPKRYTRETNVMPQWAGSCWYELRYLDPTNADRFVDPDTERYWMGPRGEGDCGGTDLYVGGAEHAVLHLLYARFWHKVLYDLGHVSSFEPFRKLFNQGYIQAYAYTDARGAYVPAEEVVERSGAYYLGDVEVSREYGKMGKSLRNVVTPDEMCAAYGADTFRVYEMSMGPLEVSRPWETRAVVGSFRFLQRVWRAIVDERSGASRVVDAPADEATRRLLHRIVDGVRGDMEAMRFNTSVAKLIELTNALTRLPATPREVAEPLVLMVAPFAPHVAEELWRRMGHPTSLAYADFPVADPDLLVAESVTYPVQVNGKVRGRVQVPADASEEVVRAAALDAVATALEGREPRKVIVVPGRMVSVVR</sequence>
<keyword id="KW-0030">Aminoacyl-tRNA synthetase</keyword>
<keyword id="KW-0067">ATP-binding</keyword>
<keyword id="KW-0963">Cytoplasm</keyword>
<keyword id="KW-0436">Ligase</keyword>
<keyword id="KW-0547">Nucleotide-binding</keyword>
<keyword id="KW-0648">Protein biosynthesis</keyword>
<comment type="catalytic activity">
    <reaction evidence="1">
        <text>tRNA(Leu) + L-leucine + ATP = L-leucyl-tRNA(Leu) + AMP + diphosphate</text>
        <dbReference type="Rhea" id="RHEA:11688"/>
        <dbReference type="Rhea" id="RHEA-COMP:9613"/>
        <dbReference type="Rhea" id="RHEA-COMP:9622"/>
        <dbReference type="ChEBI" id="CHEBI:30616"/>
        <dbReference type="ChEBI" id="CHEBI:33019"/>
        <dbReference type="ChEBI" id="CHEBI:57427"/>
        <dbReference type="ChEBI" id="CHEBI:78442"/>
        <dbReference type="ChEBI" id="CHEBI:78494"/>
        <dbReference type="ChEBI" id="CHEBI:456215"/>
        <dbReference type="EC" id="6.1.1.4"/>
    </reaction>
</comment>
<comment type="subcellular location">
    <subcellularLocation>
        <location evidence="1">Cytoplasm</location>
    </subcellularLocation>
</comment>
<comment type="similarity">
    <text evidence="1">Belongs to the class-I aminoacyl-tRNA synthetase family.</text>
</comment>
<dbReference type="EC" id="6.1.1.4" evidence="1"/>
<dbReference type="EMBL" id="CP000850">
    <property type="protein sequence ID" value="ABV99253.1"/>
    <property type="molecule type" value="Genomic_DNA"/>
</dbReference>
<dbReference type="SMR" id="A8LX93"/>
<dbReference type="STRING" id="391037.Sare_3451"/>
<dbReference type="KEGG" id="saq:Sare_3451"/>
<dbReference type="PATRIC" id="fig|391037.6.peg.3479"/>
<dbReference type="eggNOG" id="COG0495">
    <property type="taxonomic scope" value="Bacteria"/>
</dbReference>
<dbReference type="HOGENOM" id="CLU_004427_0_0_11"/>
<dbReference type="OrthoDB" id="9810365at2"/>
<dbReference type="GO" id="GO:0005829">
    <property type="term" value="C:cytosol"/>
    <property type="evidence" value="ECO:0007669"/>
    <property type="project" value="TreeGrafter"/>
</dbReference>
<dbReference type="GO" id="GO:0002161">
    <property type="term" value="F:aminoacyl-tRNA deacylase activity"/>
    <property type="evidence" value="ECO:0007669"/>
    <property type="project" value="InterPro"/>
</dbReference>
<dbReference type="GO" id="GO:0005524">
    <property type="term" value="F:ATP binding"/>
    <property type="evidence" value="ECO:0007669"/>
    <property type="project" value="UniProtKB-UniRule"/>
</dbReference>
<dbReference type="GO" id="GO:0004823">
    <property type="term" value="F:leucine-tRNA ligase activity"/>
    <property type="evidence" value="ECO:0007669"/>
    <property type="project" value="UniProtKB-UniRule"/>
</dbReference>
<dbReference type="GO" id="GO:0006429">
    <property type="term" value="P:leucyl-tRNA aminoacylation"/>
    <property type="evidence" value="ECO:0007669"/>
    <property type="project" value="UniProtKB-UniRule"/>
</dbReference>
<dbReference type="CDD" id="cd07958">
    <property type="entry name" value="Anticodon_Ia_Leu_BEm"/>
    <property type="match status" value="1"/>
</dbReference>
<dbReference type="FunFam" id="3.40.50.620:FF:000056">
    <property type="entry name" value="Leucine--tRNA ligase"/>
    <property type="match status" value="1"/>
</dbReference>
<dbReference type="FunFam" id="3.40.50.620:FF:000060">
    <property type="entry name" value="Leucine--tRNA ligase"/>
    <property type="match status" value="1"/>
</dbReference>
<dbReference type="FunFam" id="3.40.50.620:FF:000087">
    <property type="entry name" value="Leucine--tRNA ligase"/>
    <property type="match status" value="1"/>
</dbReference>
<dbReference type="FunFam" id="3.90.740.10:FF:000017">
    <property type="entry name" value="Leucine--tRNA ligase"/>
    <property type="match status" value="1"/>
</dbReference>
<dbReference type="FunFam" id="1.10.730.10:FF:000011">
    <property type="entry name" value="Leucine--tRNA ligase chloroplastic/mitochondrial"/>
    <property type="match status" value="1"/>
</dbReference>
<dbReference type="Gene3D" id="3.40.50.620">
    <property type="entry name" value="HUPs"/>
    <property type="match status" value="3"/>
</dbReference>
<dbReference type="Gene3D" id="1.10.730.10">
    <property type="entry name" value="Isoleucyl-tRNA Synthetase, Domain 1"/>
    <property type="match status" value="1"/>
</dbReference>
<dbReference type="Gene3D" id="3.90.740.10">
    <property type="entry name" value="Valyl/Leucyl/Isoleucyl-tRNA synthetase, editing domain"/>
    <property type="match status" value="1"/>
</dbReference>
<dbReference type="HAMAP" id="MF_00049_B">
    <property type="entry name" value="Leu_tRNA_synth_B"/>
    <property type="match status" value="1"/>
</dbReference>
<dbReference type="InterPro" id="IPR001412">
    <property type="entry name" value="aa-tRNA-synth_I_CS"/>
</dbReference>
<dbReference type="InterPro" id="IPR006605">
    <property type="entry name" value="G2_nidogen/fibulin_G2F"/>
</dbReference>
<dbReference type="InterPro" id="IPR002302">
    <property type="entry name" value="Leu-tRNA-ligase"/>
</dbReference>
<dbReference type="InterPro" id="IPR025709">
    <property type="entry name" value="Leu_tRNA-synth_edit"/>
</dbReference>
<dbReference type="InterPro" id="IPR013155">
    <property type="entry name" value="M/V/L/I-tRNA-synth_anticd-bd"/>
</dbReference>
<dbReference type="InterPro" id="IPR015413">
    <property type="entry name" value="Methionyl/Leucyl_tRNA_Synth"/>
</dbReference>
<dbReference type="InterPro" id="IPR014729">
    <property type="entry name" value="Rossmann-like_a/b/a_fold"/>
</dbReference>
<dbReference type="InterPro" id="IPR009080">
    <property type="entry name" value="tRNAsynth_Ia_anticodon-bd"/>
</dbReference>
<dbReference type="InterPro" id="IPR009008">
    <property type="entry name" value="Val/Leu/Ile-tRNA-synth_edit"/>
</dbReference>
<dbReference type="NCBIfam" id="TIGR00396">
    <property type="entry name" value="leuS_bact"/>
    <property type="match status" value="1"/>
</dbReference>
<dbReference type="PANTHER" id="PTHR43740:SF2">
    <property type="entry name" value="LEUCINE--TRNA LIGASE, MITOCHONDRIAL"/>
    <property type="match status" value="1"/>
</dbReference>
<dbReference type="PANTHER" id="PTHR43740">
    <property type="entry name" value="LEUCYL-TRNA SYNTHETASE"/>
    <property type="match status" value="1"/>
</dbReference>
<dbReference type="Pfam" id="PF08264">
    <property type="entry name" value="Anticodon_1"/>
    <property type="match status" value="1"/>
</dbReference>
<dbReference type="Pfam" id="PF13603">
    <property type="entry name" value="tRNA-synt_1_2"/>
    <property type="match status" value="1"/>
</dbReference>
<dbReference type="Pfam" id="PF09334">
    <property type="entry name" value="tRNA-synt_1g"/>
    <property type="match status" value="1"/>
</dbReference>
<dbReference type="PRINTS" id="PR00985">
    <property type="entry name" value="TRNASYNTHLEU"/>
</dbReference>
<dbReference type="SUPFAM" id="SSF47323">
    <property type="entry name" value="Anticodon-binding domain of a subclass of class I aminoacyl-tRNA synthetases"/>
    <property type="match status" value="1"/>
</dbReference>
<dbReference type="SUPFAM" id="SSF52374">
    <property type="entry name" value="Nucleotidylyl transferase"/>
    <property type="match status" value="1"/>
</dbReference>
<dbReference type="SUPFAM" id="SSF50677">
    <property type="entry name" value="ValRS/IleRS/LeuRS editing domain"/>
    <property type="match status" value="1"/>
</dbReference>
<dbReference type="PROSITE" id="PS00178">
    <property type="entry name" value="AA_TRNA_LIGASE_I"/>
    <property type="match status" value="1"/>
</dbReference>
<protein>
    <recommendedName>
        <fullName evidence="1">Leucine--tRNA ligase</fullName>
        <ecNumber evidence="1">6.1.1.4</ecNumber>
    </recommendedName>
    <alternativeName>
        <fullName evidence="1">Leucyl-tRNA synthetase</fullName>
        <shortName evidence="1">LeuRS</shortName>
    </alternativeName>
</protein>
<gene>
    <name evidence="1" type="primary">leuS</name>
    <name type="ordered locus">Sare_3451</name>
</gene>
<feature type="chain" id="PRO_0000334810" description="Leucine--tRNA ligase">
    <location>
        <begin position="1"/>
        <end position="952"/>
    </location>
</feature>
<feature type="short sequence motif" description="'HIGH' region">
    <location>
        <begin position="65"/>
        <end position="76"/>
    </location>
</feature>
<feature type="short sequence motif" description="'KMSKS' region">
    <location>
        <begin position="727"/>
        <end position="731"/>
    </location>
</feature>
<feature type="binding site" evidence="1">
    <location>
        <position position="730"/>
    </location>
    <ligand>
        <name>ATP</name>
        <dbReference type="ChEBI" id="CHEBI:30616"/>
    </ligand>
</feature>
<accession>A8LX93</accession>